<name>OPRD_MOUSE</name>
<feature type="chain" id="PRO_0000069963" description="Delta-type opioid receptor">
    <location>
        <begin position="1"/>
        <end position="372"/>
    </location>
</feature>
<feature type="topological domain" description="Extracellular" evidence="9">
    <location>
        <begin position="1"/>
        <end position="47"/>
    </location>
</feature>
<feature type="transmembrane region" description="Helical; Name=1">
    <location>
        <begin position="48"/>
        <end position="75"/>
    </location>
</feature>
<feature type="topological domain" description="Cytoplasmic" evidence="9">
    <location>
        <begin position="76"/>
        <end position="85"/>
    </location>
</feature>
<feature type="transmembrane region" description="Helical; Name=2">
    <location>
        <begin position="86"/>
        <end position="110"/>
    </location>
</feature>
<feature type="topological domain" description="Extracellular" evidence="9">
    <location>
        <begin position="111"/>
        <end position="122"/>
    </location>
</feature>
<feature type="transmembrane region" description="Helical; Name=3">
    <location>
        <begin position="123"/>
        <end position="144"/>
    </location>
</feature>
<feature type="topological domain" description="Cytoplasmic" evidence="9">
    <location>
        <begin position="145"/>
        <end position="163"/>
    </location>
</feature>
<feature type="transmembrane region" description="Helical; Name=4">
    <location>
        <begin position="164"/>
        <end position="186"/>
    </location>
</feature>
<feature type="topological domain" description="Extracellular" evidence="9">
    <location>
        <begin position="187"/>
        <end position="206"/>
    </location>
</feature>
<feature type="transmembrane region" description="Helical; Name=5">
    <location>
        <begin position="207"/>
        <end position="238"/>
    </location>
</feature>
<feature type="topological domain" description="Cytoplasmic" evidence="9">
    <location>
        <begin position="239"/>
        <end position="261"/>
    </location>
</feature>
<feature type="transmembrane region" description="Helical; Name=6">
    <location>
        <begin position="262"/>
        <end position="284"/>
    </location>
</feature>
<feature type="topological domain" description="Extracellular" evidence="9">
    <location>
        <begin position="285"/>
        <end position="299"/>
    </location>
</feature>
<feature type="transmembrane region" description="Helical; Name=7">
    <location>
        <begin position="300"/>
        <end position="321"/>
    </location>
</feature>
<feature type="topological domain" description="Cytoplasmic" evidence="9">
    <location>
        <begin position="322"/>
        <end position="372"/>
    </location>
</feature>
<feature type="region of interest" description="Disordered" evidence="4">
    <location>
        <begin position="340"/>
        <end position="372"/>
    </location>
</feature>
<feature type="lipid moiety-binding region" description="S-palmitoyl cysteine" evidence="2">
    <location>
        <position position="333"/>
    </location>
</feature>
<feature type="glycosylation site" description="N-linked (GlcNAc...) asparagine" evidence="2">
    <location>
        <position position="18"/>
    </location>
</feature>
<feature type="glycosylation site" description="N-linked (GlcNAc...) asparagine" evidence="2">
    <location>
        <position position="33"/>
    </location>
</feature>
<feature type="disulfide bond" evidence="3 9">
    <location>
        <begin position="121"/>
        <end position="198"/>
    </location>
</feature>
<feature type="helix" evidence="10">
    <location>
        <begin position="42"/>
        <end position="76"/>
    </location>
</feature>
<feature type="helix" evidence="10">
    <location>
        <begin position="83"/>
        <end position="100"/>
    </location>
</feature>
<feature type="helix" evidence="10">
    <location>
        <begin position="102"/>
        <end position="111"/>
    </location>
</feature>
<feature type="helix" evidence="10">
    <location>
        <begin position="118"/>
        <end position="151"/>
    </location>
</feature>
<feature type="helix" evidence="10">
    <location>
        <begin position="153"/>
        <end position="159"/>
    </location>
</feature>
<feature type="helix" evidence="10">
    <location>
        <begin position="162"/>
        <end position="186"/>
    </location>
</feature>
<feature type="strand" evidence="10">
    <location>
        <begin position="187"/>
        <end position="192"/>
    </location>
</feature>
<feature type="strand" evidence="10">
    <location>
        <begin position="195"/>
        <end position="200"/>
    </location>
</feature>
<feature type="strand" evidence="10">
    <location>
        <begin position="203"/>
        <end position="205"/>
    </location>
</feature>
<feature type="helix" evidence="10">
    <location>
        <begin position="206"/>
        <end position="220"/>
    </location>
</feature>
<feature type="helix" evidence="10">
    <location>
        <begin position="223"/>
        <end position="238"/>
    </location>
</feature>
<feature type="helix" evidence="10">
    <location>
        <begin position="258"/>
        <end position="286"/>
    </location>
</feature>
<feature type="helix" evidence="10">
    <location>
        <begin position="294"/>
        <end position="321"/>
    </location>
</feature>
<feature type="helix" evidence="10">
    <location>
        <begin position="323"/>
        <end position="326"/>
    </location>
</feature>
<protein>
    <recommendedName>
        <fullName>Delta-type opioid receptor</fullName>
        <shortName>D-OR-1</shortName>
        <shortName>DOR-1</shortName>
    </recommendedName>
    <alternativeName>
        <fullName>K56</fullName>
    </alternativeName>
    <alternativeName>
        <fullName>MSL-2</fullName>
    </alternativeName>
</protein>
<comment type="function">
    <text evidence="5 6 7">G-protein coupled receptor that functions as a receptor for endogenous enkephalins and for a subset of other opioids. Ligand binding causes a conformation change that triggers signaling via guanine nucleotide-binding proteins (G proteins) and modulates the activity of down-stream effectors, such as adenylate cyclase. Signaling leads to the inhibition of adenylate cyclase activity. Inhibits neurotransmitter release by reducing calcium ion currents and increasing potassium ion conductance. Plays a role in the perception of pain and in opiate-mediated analgesia. Plays a role in developing analgesic tolerance to morphine.</text>
</comment>
<comment type="subunit">
    <text evidence="1 8">May form homooligomers. Forms a heterodimer with OPRM1 (PubMed:18836069). Interacts with GPRASP1 (By similarity). Interacts with RTP4; the interaction promotes cell surface localization of the OPRD1-OPRM1 heterodimer (PubMed:18836069).</text>
</comment>
<comment type="interaction">
    <interactant intactId="EBI-2615936">
        <id>P32300</id>
    </interactant>
    <interactant intactId="EBI-15731539">
        <id>Q9ER80</id>
        <label>Rtp4</label>
    </interactant>
    <organismsDiffer>false</organismsDiffer>
    <experiments>2</experiments>
</comment>
<comment type="subcellular location">
    <subcellularLocation>
        <location evidence="5 6 7 8 9">Cell membrane</location>
        <topology evidence="5 6 7 9">Multi-pass membrane protein</topology>
    </subcellularLocation>
</comment>
<comment type="tissue specificity">
    <text evidence="5 7">Brain, with high concentrations in the basal ganglia and limbic regions.</text>
</comment>
<comment type="PTM">
    <text evidence="8">Ubiquitinated. A basal ubiquitination seems not to be related to degradation. Ubiquitination is increased upon formation of OPRM1:OPRD1 oligomers leading to proteasomal degradation; the ubiquitination is diminished by RTP4.</text>
</comment>
<comment type="disruption phenotype">
    <text evidence="5">Mice are born at the expected Mendelian rate; they show no obvious phenotype and are fertile. Mutant mice show decreased analgesia in response to opioids, such as deltorphin-2. They do not develop analgesic tolerance to morphine.</text>
</comment>
<comment type="similarity">
    <text evidence="3">Belongs to the G-protein coupled receptor 1 family.</text>
</comment>
<sequence length="372" mass="40561">MELVPSARAELQSSPLVNLSDAFPSAFPSAGANASGSPGARSASSLALAIAITALYSAVCAVGLLGNVLVMFGIVRYTKLKTATNIYIFNLALADALATSTLPFQSAKYLMETWPFGELLCKAVLSIDYYNMFTSIFTLTMMSVDRYIAVCHPVKALDFRTPAKAKLINICIWVLASGVGVPIMVMAVTQPRDGAVVCMLQFPSPSWYWDTVTKICVFLFAFVVPILIITVCYGLMLLRLRSVRLLSGSKEKDRSLRRITRMVLVVVGAFVVCWAPIHIFVIVWTLVDINRRDPLVVAALHLCIALGYANSSLNPVLYAFLDENFKRCFRQLCRTPCGRQEPGSLRRPRQATTRERVTACTPSDGPGGGAAA</sequence>
<reference key="1">
    <citation type="journal article" date="1992" name="Proc. Natl. Acad. Sci. U.S.A.">
        <title>The delta-opioid receptor: isolation of a cDNA by expression cloning and pharmacological characterization.</title>
        <authorList>
            <person name="Kieffer B.L."/>
            <person name="Befort K."/>
            <person name="Gaveriaux-Ruff C."/>
            <person name="Hirth C.G."/>
        </authorList>
    </citation>
    <scope>NUCLEOTIDE SEQUENCE [MRNA]</scope>
    <scope>FUNCTION</scope>
    <scope>SUBCELLULAR LOCATION</scope>
</reference>
<reference key="2">
    <citation type="journal article" date="1992" name="Science">
        <title>Cloning of a delta opioid receptor by functional expression.</title>
        <authorList>
            <person name="Evans C.J."/>
            <person name="Keith D.E. Jr."/>
            <person name="Morrison H."/>
            <person name="Magendzo K."/>
            <person name="Edwards R.H."/>
        </authorList>
    </citation>
    <scope>NUCLEOTIDE SEQUENCE [MRNA]</scope>
    <scope>FUNCTION</scope>
    <scope>SUBCELLULAR LOCATION</scope>
    <scope>TISSUE SPECIFICITY</scope>
</reference>
<reference key="3">
    <citation type="journal article" date="1993" name="Proc. Natl. Acad. Sci. U.S.A.">
        <title>Cloning and functional comparison of kappa and delta opioid receptors from mouse brain.</title>
        <authorList>
            <person name="Yasuda K."/>
            <person name="Raynor K."/>
            <person name="Kong H."/>
            <person name="Breder C.D."/>
            <person name="Takeda J."/>
            <person name="Reisine T."/>
            <person name="Bell G.I."/>
        </authorList>
    </citation>
    <scope>NUCLEOTIDE SEQUENCE [MRNA]</scope>
    <source>
        <tissue>Brain</tissue>
    </source>
</reference>
<reference key="4">
    <citation type="journal article" date="1993" name="Proc. West. Pharmacol. Soc.">
        <title>Characterization and mapping of a delta opioid receptor clone from NG108-15 cells.</title>
        <authorList>
            <person name="Keith D.E. Jr."/>
            <person name="Anton B."/>
            <person name="Evans C.J."/>
        </authorList>
    </citation>
    <scope>NUCLEOTIDE SEQUENCE [MRNA]</scope>
</reference>
<reference key="5">
    <citation type="journal article" date="1993" name="Proc. Natl. Acad. Sci. U.S.A.">
        <title>Regional expression and chromosomal localization of the delta opiate receptor gene.</title>
        <authorList>
            <person name="Bzdega T."/>
            <person name="Chin H."/>
            <person name="Kim K."/>
            <person name="Jung H.H."/>
            <person name="Kozak C.A."/>
            <person name="Klee W.A."/>
        </authorList>
    </citation>
    <scope>NUCLEOTIDE SEQUENCE [MRNA] OF 8-372</scope>
</reference>
<reference key="6">
    <citation type="journal article" date="1999" name="Neuron">
        <title>Retention of supraspinal delta-like analgesia and loss of morphine tolerance in delta opioid receptor knockout mice.</title>
        <authorList>
            <person name="Zhu Y."/>
            <person name="King M.A."/>
            <person name="Schuller A.G."/>
            <person name="Nitsche J.F."/>
            <person name="Reidl M."/>
            <person name="Elde R.P."/>
            <person name="Unterwald E."/>
            <person name="Pasternak G.W."/>
            <person name="Pintar J.E."/>
        </authorList>
    </citation>
    <scope>DISRUPTION PHENOTYPE</scope>
    <scope>FUNCTION</scope>
    <scope>SUBCELLULAR LOCATION</scope>
    <scope>TISSUE SPECIFICITY</scope>
</reference>
<reference key="7">
    <citation type="journal article" date="2008" name="Proc. Natl. Acad. Sci. U.S.A.">
        <title>Cell surface targeting of mu-delta opioid receptor heterodimers by RTP4.</title>
        <authorList>
            <person name="Decaillot F.M."/>
            <person name="Rozenfeld R."/>
            <person name="Gupta A."/>
            <person name="Devi L.A."/>
        </authorList>
    </citation>
    <scope>INTERACTION WITH OPRM1 AND RTP4</scope>
    <scope>SUBCELLULAR LOCATION</scope>
    <scope>UBIQUITINATION</scope>
</reference>
<reference key="8">
    <citation type="journal article" date="1996" name="Protein Eng.">
        <title>A 3D model of the delta opioid receptor and ligand-receptor complexes.</title>
        <authorList>
            <person name="Alkorta I."/>
            <person name="Loew G.H."/>
        </authorList>
    </citation>
    <scope>3D-STRUCTURE MODELING</scope>
</reference>
<reference key="9">
    <citation type="journal article" date="2012" name="Nature">
        <title>Structure of the delta-opioid receptor bound to naltrindole.</title>
        <authorList>
            <person name="Granier S."/>
            <person name="Manglik A."/>
            <person name="Kruse A.C."/>
            <person name="Kobilka T.S."/>
            <person name="Thian F.S."/>
            <person name="Weis W.I."/>
            <person name="Kobilka B.K."/>
        </authorList>
    </citation>
    <scope>X-RAY CRYSTALLOGRAPHY (3.4 ANGSTROMS) OF 36-342 IN COMPLEX WITH NALTRINDOLE</scope>
    <scope>SUBCELLULAR LOCATION</scope>
    <scope>DISULFIDE BOND</scope>
    <scope>TOPOLOGY</scope>
</reference>
<keyword id="KW-0002">3D-structure</keyword>
<keyword id="KW-1003">Cell membrane</keyword>
<keyword id="KW-1015">Disulfide bond</keyword>
<keyword id="KW-0297">G-protein coupled receptor</keyword>
<keyword id="KW-0325">Glycoprotein</keyword>
<keyword id="KW-0449">Lipoprotein</keyword>
<keyword id="KW-0472">Membrane</keyword>
<keyword id="KW-0564">Palmitate</keyword>
<keyword id="KW-0675">Receptor</keyword>
<keyword id="KW-1185">Reference proteome</keyword>
<keyword id="KW-0807">Transducer</keyword>
<keyword id="KW-0812">Transmembrane</keyword>
<keyword id="KW-1133">Transmembrane helix</keyword>
<keyword id="KW-0832">Ubl conjugation</keyword>
<gene>
    <name type="primary">Oprd1</name>
</gene>
<organism>
    <name type="scientific">Mus musculus</name>
    <name type="common">Mouse</name>
    <dbReference type="NCBI Taxonomy" id="10090"/>
    <lineage>
        <taxon>Eukaryota</taxon>
        <taxon>Metazoa</taxon>
        <taxon>Chordata</taxon>
        <taxon>Craniata</taxon>
        <taxon>Vertebrata</taxon>
        <taxon>Euteleostomi</taxon>
        <taxon>Mammalia</taxon>
        <taxon>Eutheria</taxon>
        <taxon>Euarchontoglires</taxon>
        <taxon>Glires</taxon>
        <taxon>Rodentia</taxon>
        <taxon>Myomorpha</taxon>
        <taxon>Muroidea</taxon>
        <taxon>Muridae</taxon>
        <taxon>Murinae</taxon>
        <taxon>Mus</taxon>
        <taxon>Mus</taxon>
    </lineage>
</organism>
<dbReference type="EMBL" id="L06322">
    <property type="protein sequence ID" value="AAA37522.1"/>
    <property type="molecule type" value="mRNA"/>
</dbReference>
<dbReference type="EMBL" id="L07271">
    <property type="status" value="NOT_ANNOTATED_CDS"/>
    <property type="molecule type" value="mRNA"/>
</dbReference>
<dbReference type="EMBL" id="L11064">
    <property type="protein sequence ID" value="AAA37520.1"/>
    <property type="molecule type" value="mRNA"/>
</dbReference>
<dbReference type="EMBL" id="S65335">
    <property type="protein sequence ID" value="AAA16009.1"/>
    <property type="molecule type" value="mRNA"/>
</dbReference>
<dbReference type="EMBL" id="S66181">
    <property type="protein sequence ID" value="AAB28546.1"/>
    <property type="molecule type" value="mRNA"/>
</dbReference>
<dbReference type="CCDS" id="CCDS18718.1"/>
<dbReference type="PIR" id="B48227">
    <property type="entry name" value="B48227"/>
</dbReference>
<dbReference type="RefSeq" id="NP_038650.3">
    <property type="nucleotide sequence ID" value="NM_013622.3"/>
</dbReference>
<dbReference type="PDB" id="4EJ4">
    <property type="method" value="X-ray"/>
    <property type="resolution" value="3.40 A"/>
    <property type="chains" value="A=36-342"/>
</dbReference>
<dbReference type="PDBsum" id="4EJ4"/>
<dbReference type="SMR" id="P32300"/>
<dbReference type="CORUM" id="P32300"/>
<dbReference type="DIP" id="DIP-46417N"/>
<dbReference type="FunCoup" id="P32300">
    <property type="interactions" value="722"/>
</dbReference>
<dbReference type="IntAct" id="P32300">
    <property type="interactions" value="9"/>
</dbReference>
<dbReference type="STRING" id="10090.ENSMUSP00000050077"/>
<dbReference type="BindingDB" id="P32300"/>
<dbReference type="ChEMBL" id="CHEMBL3222"/>
<dbReference type="DrugCentral" id="P32300"/>
<dbReference type="GuidetoPHARMACOLOGY" id="317"/>
<dbReference type="GlyCosmos" id="P32300">
    <property type="glycosylation" value="2 sites, No reported glycans"/>
</dbReference>
<dbReference type="GlyGen" id="P32300">
    <property type="glycosylation" value="2 sites"/>
</dbReference>
<dbReference type="iPTMnet" id="P32300"/>
<dbReference type="PhosphoSitePlus" id="P32300"/>
<dbReference type="PaxDb" id="10090-ENSMUSP00000050077"/>
<dbReference type="ProteomicsDB" id="294201"/>
<dbReference type="Antibodypedia" id="2932">
    <property type="antibodies" value="423 antibodies from 37 providers"/>
</dbReference>
<dbReference type="DNASU" id="18386"/>
<dbReference type="Ensembl" id="ENSMUST00000056336.2">
    <property type="protein sequence ID" value="ENSMUSP00000050077.2"/>
    <property type="gene ID" value="ENSMUSG00000050511.2"/>
</dbReference>
<dbReference type="GeneID" id="18386"/>
<dbReference type="KEGG" id="mmu:18386"/>
<dbReference type="UCSC" id="uc008vap.1">
    <property type="organism name" value="mouse"/>
</dbReference>
<dbReference type="AGR" id="MGI:97438"/>
<dbReference type="CTD" id="4985"/>
<dbReference type="MGI" id="MGI:97438">
    <property type="gene designation" value="Oprd1"/>
</dbReference>
<dbReference type="VEuPathDB" id="HostDB:ENSMUSG00000050511"/>
<dbReference type="eggNOG" id="KOG3656">
    <property type="taxonomic scope" value="Eukaryota"/>
</dbReference>
<dbReference type="GeneTree" id="ENSGT00940000157669"/>
<dbReference type="HOGENOM" id="CLU_009579_8_1_1"/>
<dbReference type="InParanoid" id="P32300"/>
<dbReference type="OMA" id="WGNGTAW"/>
<dbReference type="OrthoDB" id="6076970at2759"/>
<dbReference type="PhylomeDB" id="P32300"/>
<dbReference type="TreeFam" id="TF315737"/>
<dbReference type="Reactome" id="R-MMU-375276">
    <property type="pathway name" value="Peptide ligand-binding receptors"/>
</dbReference>
<dbReference type="Reactome" id="R-MMU-418594">
    <property type="pathway name" value="G alpha (i) signalling events"/>
</dbReference>
<dbReference type="BioGRID-ORCS" id="18386">
    <property type="hits" value="1 hit in 79 CRISPR screens"/>
</dbReference>
<dbReference type="ChiTaRS" id="Oprd1">
    <property type="organism name" value="mouse"/>
</dbReference>
<dbReference type="EvolutionaryTrace" id="P32300"/>
<dbReference type="PRO" id="PR:P32300"/>
<dbReference type="Proteomes" id="UP000000589">
    <property type="component" value="Chromosome 4"/>
</dbReference>
<dbReference type="RNAct" id="P32300">
    <property type="molecule type" value="protein"/>
</dbReference>
<dbReference type="Bgee" id="ENSMUSG00000050511">
    <property type="expression patterns" value="Expressed in trophoblast giant cell and 51 other cell types or tissues"/>
</dbReference>
<dbReference type="ExpressionAtlas" id="P32300">
    <property type="expression patterns" value="baseline and differential"/>
</dbReference>
<dbReference type="GO" id="GO:0043679">
    <property type="term" value="C:axon terminus"/>
    <property type="evidence" value="ECO:0007669"/>
    <property type="project" value="Ensembl"/>
</dbReference>
<dbReference type="GO" id="GO:0032590">
    <property type="term" value="C:dendrite membrane"/>
    <property type="evidence" value="ECO:0007669"/>
    <property type="project" value="Ensembl"/>
</dbReference>
<dbReference type="GO" id="GO:0016020">
    <property type="term" value="C:membrane"/>
    <property type="evidence" value="ECO:0000314"/>
    <property type="project" value="MGI"/>
</dbReference>
<dbReference type="GO" id="GO:0098992">
    <property type="term" value="C:neuronal dense core vesicle"/>
    <property type="evidence" value="ECO:0000314"/>
    <property type="project" value="SynGO"/>
</dbReference>
<dbReference type="GO" id="GO:0098839">
    <property type="term" value="C:postsynaptic density membrane"/>
    <property type="evidence" value="ECO:0007669"/>
    <property type="project" value="Ensembl"/>
</dbReference>
<dbReference type="GO" id="GO:0042734">
    <property type="term" value="C:presynaptic membrane"/>
    <property type="evidence" value="ECO:0007669"/>
    <property type="project" value="Ensembl"/>
</dbReference>
<dbReference type="GO" id="GO:0097444">
    <property type="term" value="C:spine apparatus"/>
    <property type="evidence" value="ECO:0007669"/>
    <property type="project" value="Ensembl"/>
</dbReference>
<dbReference type="GO" id="GO:0030672">
    <property type="term" value="C:synaptic vesicle membrane"/>
    <property type="evidence" value="ECO:0007669"/>
    <property type="project" value="Ensembl"/>
</dbReference>
<dbReference type="GO" id="GO:0038046">
    <property type="term" value="F:G protein-coupled enkephalin receptor activity"/>
    <property type="evidence" value="ECO:0007669"/>
    <property type="project" value="Ensembl"/>
</dbReference>
<dbReference type="GO" id="GO:0004985">
    <property type="term" value="F:G protein-coupled opioid receptor activity"/>
    <property type="evidence" value="ECO:0000314"/>
    <property type="project" value="MGI"/>
</dbReference>
<dbReference type="GO" id="GO:0033612">
    <property type="term" value="F:receptor serine/threonine kinase binding"/>
    <property type="evidence" value="ECO:0007669"/>
    <property type="project" value="Ensembl"/>
</dbReference>
<dbReference type="GO" id="GO:0007193">
    <property type="term" value="P:adenylate cyclase-inhibiting G protein-coupled receptor signaling pathway"/>
    <property type="evidence" value="ECO:0000314"/>
    <property type="project" value="MGI"/>
</dbReference>
<dbReference type="GO" id="GO:0008344">
    <property type="term" value="P:adult locomotory behavior"/>
    <property type="evidence" value="ECO:0000315"/>
    <property type="project" value="MGI"/>
</dbReference>
<dbReference type="GO" id="GO:0071363">
    <property type="term" value="P:cellular response to growth factor stimulus"/>
    <property type="evidence" value="ECO:0007669"/>
    <property type="project" value="Ensembl"/>
</dbReference>
<dbReference type="GO" id="GO:0071456">
    <property type="term" value="P:cellular response to hypoxia"/>
    <property type="evidence" value="ECO:0007669"/>
    <property type="project" value="Ensembl"/>
</dbReference>
<dbReference type="GO" id="GO:0097237">
    <property type="term" value="P:cellular response to toxic substance"/>
    <property type="evidence" value="ECO:0007669"/>
    <property type="project" value="Ensembl"/>
</dbReference>
<dbReference type="GO" id="GO:0042755">
    <property type="term" value="P:eating behavior"/>
    <property type="evidence" value="ECO:0007669"/>
    <property type="project" value="Ensembl"/>
</dbReference>
<dbReference type="GO" id="GO:0010629">
    <property type="term" value="P:negative regulation of gene expression"/>
    <property type="evidence" value="ECO:0007669"/>
    <property type="project" value="Ensembl"/>
</dbReference>
<dbReference type="GO" id="GO:0031333">
    <property type="term" value="P:negative regulation of protein-containing complex assembly"/>
    <property type="evidence" value="ECO:0007669"/>
    <property type="project" value="Ensembl"/>
</dbReference>
<dbReference type="GO" id="GO:0007218">
    <property type="term" value="P:neuropeptide signaling pathway"/>
    <property type="evidence" value="ECO:0000314"/>
    <property type="project" value="MGI"/>
</dbReference>
<dbReference type="GO" id="GO:0007200">
    <property type="term" value="P:phospholipase C-activating G protein-coupled receptor signaling pathway"/>
    <property type="evidence" value="ECO:0000250"/>
    <property type="project" value="UniProtKB"/>
</dbReference>
<dbReference type="GO" id="GO:0051924">
    <property type="term" value="P:regulation of calcium ion transport"/>
    <property type="evidence" value="ECO:0007669"/>
    <property type="project" value="Ensembl"/>
</dbReference>
<dbReference type="GO" id="GO:0051881">
    <property type="term" value="P:regulation of mitochondrial membrane potential"/>
    <property type="evidence" value="ECO:0007669"/>
    <property type="project" value="Ensembl"/>
</dbReference>
<dbReference type="GO" id="GO:0045471">
    <property type="term" value="P:response to ethanol"/>
    <property type="evidence" value="ECO:0007669"/>
    <property type="project" value="Ensembl"/>
</dbReference>
<dbReference type="GO" id="GO:0035094">
    <property type="term" value="P:response to nicotine"/>
    <property type="evidence" value="ECO:0007669"/>
    <property type="project" value="Ensembl"/>
</dbReference>
<dbReference type="CDD" id="cd15089">
    <property type="entry name" value="7tmA_Delta_opioid_R"/>
    <property type="match status" value="1"/>
</dbReference>
<dbReference type="FunFam" id="1.20.1070.10:FF:000014">
    <property type="entry name" value="Kappa-type opioid receptor 1"/>
    <property type="match status" value="1"/>
</dbReference>
<dbReference type="Gene3D" id="1.20.1070.10">
    <property type="entry name" value="Rhodopsin 7-helix transmembrane proteins"/>
    <property type="match status" value="1"/>
</dbReference>
<dbReference type="InterPro" id="IPR000321">
    <property type="entry name" value="Delta_opi_rcpt"/>
</dbReference>
<dbReference type="InterPro" id="IPR000276">
    <property type="entry name" value="GPCR_Rhodpsn"/>
</dbReference>
<dbReference type="InterPro" id="IPR017452">
    <property type="entry name" value="GPCR_Rhodpsn_7TM"/>
</dbReference>
<dbReference type="InterPro" id="IPR001418">
    <property type="entry name" value="Opioid_rcpt"/>
</dbReference>
<dbReference type="PANTHER" id="PTHR24229:SF2">
    <property type="entry name" value="DELTA-TYPE OPIOID RECEPTOR"/>
    <property type="match status" value="1"/>
</dbReference>
<dbReference type="PANTHER" id="PTHR24229">
    <property type="entry name" value="NEUROPEPTIDES RECEPTOR"/>
    <property type="match status" value="1"/>
</dbReference>
<dbReference type="Pfam" id="PF00001">
    <property type="entry name" value="7tm_1"/>
    <property type="match status" value="1"/>
</dbReference>
<dbReference type="PRINTS" id="PR00525">
    <property type="entry name" value="DELTAOPIOIDR"/>
</dbReference>
<dbReference type="PRINTS" id="PR00237">
    <property type="entry name" value="GPCRRHODOPSN"/>
</dbReference>
<dbReference type="PRINTS" id="PR00384">
    <property type="entry name" value="OPIOIDR"/>
</dbReference>
<dbReference type="SMART" id="SM01381">
    <property type="entry name" value="7TM_GPCR_Srsx"/>
    <property type="match status" value="1"/>
</dbReference>
<dbReference type="SUPFAM" id="SSF81321">
    <property type="entry name" value="Family A G protein-coupled receptor-like"/>
    <property type="match status" value="1"/>
</dbReference>
<dbReference type="PROSITE" id="PS00237">
    <property type="entry name" value="G_PROTEIN_RECEP_F1_1"/>
    <property type="match status" value="1"/>
</dbReference>
<dbReference type="PROSITE" id="PS50262">
    <property type="entry name" value="G_PROTEIN_RECEP_F1_2"/>
    <property type="match status" value="1"/>
</dbReference>
<accession>P32300</accession>
<proteinExistence type="evidence at protein level"/>
<evidence type="ECO:0000250" key="1">
    <source>
        <dbReference type="UniProtKB" id="P41143"/>
    </source>
</evidence>
<evidence type="ECO:0000255" key="2"/>
<evidence type="ECO:0000255" key="3">
    <source>
        <dbReference type="PROSITE-ProRule" id="PRU00521"/>
    </source>
</evidence>
<evidence type="ECO:0000256" key="4">
    <source>
        <dbReference type="SAM" id="MobiDB-lite"/>
    </source>
</evidence>
<evidence type="ECO:0000269" key="5">
    <source>
    </source>
</evidence>
<evidence type="ECO:0000269" key="6">
    <source>
    </source>
</evidence>
<evidence type="ECO:0000269" key="7">
    <source>
    </source>
</evidence>
<evidence type="ECO:0000269" key="8">
    <source>
    </source>
</evidence>
<evidence type="ECO:0000269" key="9">
    <source>
    </source>
</evidence>
<evidence type="ECO:0007829" key="10">
    <source>
        <dbReference type="PDB" id="4EJ4"/>
    </source>
</evidence>